<organism>
    <name type="scientific">Finegoldia magna (strain ATCC 29328 / DSM 20472 / WAL 2508)</name>
    <name type="common">Peptostreptococcus magnus</name>
    <dbReference type="NCBI Taxonomy" id="334413"/>
    <lineage>
        <taxon>Bacteria</taxon>
        <taxon>Bacillati</taxon>
        <taxon>Bacillota</taxon>
        <taxon>Tissierellia</taxon>
        <taxon>Tissierellales</taxon>
        <taxon>Peptoniphilaceae</taxon>
        <taxon>Finegoldia</taxon>
    </lineage>
</organism>
<protein>
    <recommendedName>
        <fullName evidence="1">Crossover junction endodeoxyribonuclease RuvC</fullName>
        <ecNumber evidence="1">3.1.21.10</ecNumber>
    </recommendedName>
    <alternativeName>
        <fullName evidence="1">Holliday junction nuclease RuvC</fullName>
    </alternativeName>
    <alternativeName>
        <fullName evidence="1">Holliday junction resolvase RuvC</fullName>
    </alternativeName>
</protein>
<proteinExistence type="inferred from homology"/>
<gene>
    <name evidence="1" type="primary">ruvC</name>
    <name type="ordered locus">FMG_0817</name>
</gene>
<accession>B0S1J5</accession>
<feature type="chain" id="PRO_1000090526" description="Crossover junction endodeoxyribonuclease RuvC">
    <location>
        <begin position="1"/>
        <end position="164"/>
    </location>
</feature>
<feature type="active site" evidence="1">
    <location>
        <position position="7"/>
    </location>
</feature>
<feature type="active site" evidence="1">
    <location>
        <position position="67"/>
    </location>
</feature>
<feature type="active site" evidence="1">
    <location>
        <position position="140"/>
    </location>
</feature>
<feature type="binding site" evidence="1">
    <location>
        <position position="7"/>
    </location>
    <ligand>
        <name>Mg(2+)</name>
        <dbReference type="ChEBI" id="CHEBI:18420"/>
        <label>1</label>
    </ligand>
</feature>
<feature type="binding site" evidence="1">
    <location>
        <position position="67"/>
    </location>
    <ligand>
        <name>Mg(2+)</name>
        <dbReference type="ChEBI" id="CHEBI:18420"/>
        <label>2</label>
    </ligand>
</feature>
<feature type="binding site" evidence="1">
    <location>
        <position position="140"/>
    </location>
    <ligand>
        <name>Mg(2+)</name>
        <dbReference type="ChEBI" id="CHEBI:18420"/>
        <label>1</label>
    </ligand>
</feature>
<reference key="1">
    <citation type="journal article" date="2008" name="DNA Res.">
        <title>Complete genome sequence of Finegoldia magna, an anaerobic opportunistic pathogen.</title>
        <authorList>
            <person name="Goto T."/>
            <person name="Yamashita A."/>
            <person name="Hirakawa H."/>
            <person name="Matsutani M."/>
            <person name="Todo K."/>
            <person name="Ohshima K."/>
            <person name="Toh H."/>
            <person name="Miyamoto K."/>
            <person name="Kuhara S."/>
            <person name="Hattori M."/>
            <person name="Shimizu T."/>
            <person name="Akimoto S."/>
        </authorList>
    </citation>
    <scope>NUCLEOTIDE SEQUENCE [LARGE SCALE GENOMIC DNA]</scope>
    <source>
        <strain>ATCC 29328 / DSM 20472 / WAL 2508</strain>
    </source>
</reference>
<comment type="function">
    <text evidence="1">The RuvA-RuvB-RuvC complex processes Holliday junction (HJ) DNA during genetic recombination and DNA repair. Endonuclease that resolves HJ intermediates. Cleaves cruciform DNA by making single-stranded nicks across the HJ at symmetrical positions within the homologous arms, yielding a 5'-phosphate and a 3'-hydroxyl group; requires a central core of homology in the junction. The consensus cleavage sequence is 5'-(A/T)TT(C/G)-3'. Cleavage occurs on the 3'-side of the TT dinucleotide at the point of strand exchange. HJ branch migration catalyzed by RuvA-RuvB allows RuvC to scan DNA until it finds its consensus sequence, where it cleaves and resolves the cruciform DNA.</text>
</comment>
<comment type="catalytic activity">
    <reaction evidence="1">
        <text>Endonucleolytic cleavage at a junction such as a reciprocal single-stranded crossover between two homologous DNA duplexes (Holliday junction).</text>
        <dbReference type="EC" id="3.1.21.10"/>
    </reaction>
</comment>
<comment type="cofactor">
    <cofactor evidence="1">
        <name>Mg(2+)</name>
        <dbReference type="ChEBI" id="CHEBI:18420"/>
    </cofactor>
    <text evidence="1">Binds 2 Mg(2+) ion per subunit.</text>
</comment>
<comment type="subunit">
    <text evidence="1">Homodimer which binds Holliday junction (HJ) DNA. The HJ becomes 2-fold symmetrical on binding to RuvC with unstacked arms; it has a different conformation from HJ DNA in complex with RuvA. In the full resolvosome a probable DNA-RuvA(4)-RuvB(12)-RuvC(2) complex forms which resolves the HJ.</text>
</comment>
<comment type="subcellular location">
    <subcellularLocation>
        <location evidence="1">Cytoplasm</location>
    </subcellularLocation>
</comment>
<comment type="similarity">
    <text evidence="1">Belongs to the RuvC family.</text>
</comment>
<evidence type="ECO:0000255" key="1">
    <source>
        <dbReference type="HAMAP-Rule" id="MF_00034"/>
    </source>
</evidence>
<sequence>MRVLGIDPGIAIVGYSILDYDNNKIKCLEYGCITTSSKSALPDRLSFIYQEMNKIIDEFQPDDCAFEELFFNKNVKTAITVSQARGVEILSCINKDLRLYEYTPLQIKQAVVGYGRADKRQVQETVKTILKFNEIPKPDDAADAVAVALCHIFGSKFKYLNEMK</sequence>
<keyword id="KW-0963">Cytoplasm</keyword>
<keyword id="KW-0227">DNA damage</keyword>
<keyword id="KW-0233">DNA recombination</keyword>
<keyword id="KW-0234">DNA repair</keyword>
<keyword id="KW-0238">DNA-binding</keyword>
<keyword id="KW-0255">Endonuclease</keyword>
<keyword id="KW-0378">Hydrolase</keyword>
<keyword id="KW-0460">Magnesium</keyword>
<keyword id="KW-0479">Metal-binding</keyword>
<keyword id="KW-0540">Nuclease</keyword>
<keyword id="KW-1185">Reference proteome</keyword>
<dbReference type="EC" id="3.1.21.10" evidence="1"/>
<dbReference type="EMBL" id="AP008971">
    <property type="protein sequence ID" value="BAG08235.1"/>
    <property type="molecule type" value="Genomic_DNA"/>
</dbReference>
<dbReference type="RefSeq" id="WP_002842206.1">
    <property type="nucleotide sequence ID" value="NC_010376.1"/>
</dbReference>
<dbReference type="SMR" id="B0S1J5"/>
<dbReference type="STRING" id="334413.FMG_0817"/>
<dbReference type="KEGG" id="fma:FMG_0817"/>
<dbReference type="eggNOG" id="COG0817">
    <property type="taxonomic scope" value="Bacteria"/>
</dbReference>
<dbReference type="HOGENOM" id="CLU_091257_3_1_9"/>
<dbReference type="Proteomes" id="UP000001319">
    <property type="component" value="Chromosome"/>
</dbReference>
<dbReference type="GO" id="GO:0005737">
    <property type="term" value="C:cytoplasm"/>
    <property type="evidence" value="ECO:0007669"/>
    <property type="project" value="UniProtKB-SubCell"/>
</dbReference>
<dbReference type="GO" id="GO:0048476">
    <property type="term" value="C:Holliday junction resolvase complex"/>
    <property type="evidence" value="ECO:0007669"/>
    <property type="project" value="UniProtKB-UniRule"/>
</dbReference>
<dbReference type="GO" id="GO:0008821">
    <property type="term" value="F:crossover junction DNA endonuclease activity"/>
    <property type="evidence" value="ECO:0007669"/>
    <property type="project" value="UniProtKB-UniRule"/>
</dbReference>
<dbReference type="GO" id="GO:0003677">
    <property type="term" value="F:DNA binding"/>
    <property type="evidence" value="ECO:0007669"/>
    <property type="project" value="UniProtKB-KW"/>
</dbReference>
<dbReference type="GO" id="GO:0000287">
    <property type="term" value="F:magnesium ion binding"/>
    <property type="evidence" value="ECO:0007669"/>
    <property type="project" value="UniProtKB-UniRule"/>
</dbReference>
<dbReference type="GO" id="GO:0006310">
    <property type="term" value="P:DNA recombination"/>
    <property type="evidence" value="ECO:0007669"/>
    <property type="project" value="UniProtKB-UniRule"/>
</dbReference>
<dbReference type="GO" id="GO:0006281">
    <property type="term" value="P:DNA repair"/>
    <property type="evidence" value="ECO:0007669"/>
    <property type="project" value="UniProtKB-UniRule"/>
</dbReference>
<dbReference type="CDD" id="cd16962">
    <property type="entry name" value="RuvC"/>
    <property type="match status" value="1"/>
</dbReference>
<dbReference type="FunFam" id="3.30.420.10:FF:000002">
    <property type="entry name" value="Crossover junction endodeoxyribonuclease RuvC"/>
    <property type="match status" value="1"/>
</dbReference>
<dbReference type="Gene3D" id="3.30.420.10">
    <property type="entry name" value="Ribonuclease H-like superfamily/Ribonuclease H"/>
    <property type="match status" value="1"/>
</dbReference>
<dbReference type="HAMAP" id="MF_00034">
    <property type="entry name" value="RuvC"/>
    <property type="match status" value="1"/>
</dbReference>
<dbReference type="InterPro" id="IPR012337">
    <property type="entry name" value="RNaseH-like_sf"/>
</dbReference>
<dbReference type="InterPro" id="IPR036397">
    <property type="entry name" value="RNaseH_sf"/>
</dbReference>
<dbReference type="InterPro" id="IPR020563">
    <property type="entry name" value="X-over_junc_endoDNase_Mg_BS"/>
</dbReference>
<dbReference type="InterPro" id="IPR002176">
    <property type="entry name" value="X-over_junc_endoDNase_RuvC"/>
</dbReference>
<dbReference type="NCBIfam" id="NF000711">
    <property type="entry name" value="PRK00039.2-1"/>
    <property type="match status" value="1"/>
</dbReference>
<dbReference type="NCBIfam" id="TIGR00228">
    <property type="entry name" value="ruvC"/>
    <property type="match status" value="1"/>
</dbReference>
<dbReference type="PANTHER" id="PTHR30194">
    <property type="entry name" value="CROSSOVER JUNCTION ENDODEOXYRIBONUCLEASE RUVC"/>
    <property type="match status" value="1"/>
</dbReference>
<dbReference type="PANTHER" id="PTHR30194:SF3">
    <property type="entry name" value="CROSSOVER JUNCTION ENDODEOXYRIBONUCLEASE RUVC"/>
    <property type="match status" value="1"/>
</dbReference>
<dbReference type="Pfam" id="PF02075">
    <property type="entry name" value="RuvC"/>
    <property type="match status" value="1"/>
</dbReference>
<dbReference type="PRINTS" id="PR00696">
    <property type="entry name" value="RSOLVASERUVC"/>
</dbReference>
<dbReference type="SUPFAM" id="SSF53098">
    <property type="entry name" value="Ribonuclease H-like"/>
    <property type="match status" value="1"/>
</dbReference>
<dbReference type="PROSITE" id="PS01321">
    <property type="entry name" value="RUVC"/>
    <property type="match status" value="1"/>
</dbReference>
<name>RUVC_FINM2</name>